<gene>
    <name evidence="1" type="primary">mutS</name>
    <name type="ordered locus">Sden_1207</name>
</gene>
<feature type="chain" id="PRO_1000008093" description="DNA mismatch repair protein MutS">
    <location>
        <begin position="1"/>
        <end position="862"/>
    </location>
</feature>
<feature type="region of interest" description="Disordered" evidence="2">
    <location>
        <begin position="799"/>
        <end position="824"/>
    </location>
</feature>
<feature type="compositionally biased region" description="Low complexity" evidence="2">
    <location>
        <begin position="806"/>
        <end position="824"/>
    </location>
</feature>
<feature type="binding site" evidence="1">
    <location>
        <begin position="618"/>
        <end position="625"/>
    </location>
    <ligand>
        <name>ATP</name>
        <dbReference type="ChEBI" id="CHEBI:30616"/>
    </ligand>
</feature>
<comment type="function">
    <text evidence="1">This protein is involved in the repair of mismatches in DNA. It is possible that it carries out the mismatch recognition step. This protein has a weak ATPase activity.</text>
</comment>
<comment type="similarity">
    <text evidence="1">Belongs to the DNA mismatch repair MutS family.</text>
</comment>
<keyword id="KW-0067">ATP-binding</keyword>
<keyword id="KW-0227">DNA damage</keyword>
<keyword id="KW-0234">DNA repair</keyword>
<keyword id="KW-0238">DNA-binding</keyword>
<keyword id="KW-0547">Nucleotide-binding</keyword>
<keyword id="KW-1185">Reference proteome</keyword>
<protein>
    <recommendedName>
        <fullName evidence="1">DNA mismatch repair protein MutS</fullName>
    </recommendedName>
</protein>
<accession>Q12PY3</accession>
<organism>
    <name type="scientific">Shewanella denitrificans (strain OS217 / ATCC BAA-1090 / DSM 15013)</name>
    <dbReference type="NCBI Taxonomy" id="318161"/>
    <lineage>
        <taxon>Bacteria</taxon>
        <taxon>Pseudomonadati</taxon>
        <taxon>Pseudomonadota</taxon>
        <taxon>Gammaproteobacteria</taxon>
        <taxon>Alteromonadales</taxon>
        <taxon>Shewanellaceae</taxon>
        <taxon>Shewanella</taxon>
    </lineage>
</organism>
<dbReference type="EMBL" id="CP000302">
    <property type="protein sequence ID" value="ABE54493.1"/>
    <property type="molecule type" value="Genomic_DNA"/>
</dbReference>
<dbReference type="RefSeq" id="WP_011495652.1">
    <property type="nucleotide sequence ID" value="NC_007954.1"/>
</dbReference>
<dbReference type="SMR" id="Q12PY3"/>
<dbReference type="STRING" id="318161.Sden_1207"/>
<dbReference type="KEGG" id="sdn:Sden_1207"/>
<dbReference type="eggNOG" id="COG0249">
    <property type="taxonomic scope" value="Bacteria"/>
</dbReference>
<dbReference type="HOGENOM" id="CLU_002472_4_0_6"/>
<dbReference type="OrthoDB" id="9802448at2"/>
<dbReference type="Proteomes" id="UP000001982">
    <property type="component" value="Chromosome"/>
</dbReference>
<dbReference type="GO" id="GO:0005829">
    <property type="term" value="C:cytosol"/>
    <property type="evidence" value="ECO:0007669"/>
    <property type="project" value="TreeGrafter"/>
</dbReference>
<dbReference type="GO" id="GO:0005524">
    <property type="term" value="F:ATP binding"/>
    <property type="evidence" value="ECO:0007669"/>
    <property type="project" value="UniProtKB-UniRule"/>
</dbReference>
<dbReference type="GO" id="GO:0140664">
    <property type="term" value="F:ATP-dependent DNA damage sensor activity"/>
    <property type="evidence" value="ECO:0007669"/>
    <property type="project" value="InterPro"/>
</dbReference>
<dbReference type="GO" id="GO:0003684">
    <property type="term" value="F:damaged DNA binding"/>
    <property type="evidence" value="ECO:0007669"/>
    <property type="project" value="UniProtKB-UniRule"/>
</dbReference>
<dbReference type="GO" id="GO:0030983">
    <property type="term" value="F:mismatched DNA binding"/>
    <property type="evidence" value="ECO:0007669"/>
    <property type="project" value="InterPro"/>
</dbReference>
<dbReference type="GO" id="GO:0006298">
    <property type="term" value="P:mismatch repair"/>
    <property type="evidence" value="ECO:0007669"/>
    <property type="project" value="UniProtKB-UniRule"/>
</dbReference>
<dbReference type="CDD" id="cd03284">
    <property type="entry name" value="ABC_MutS1"/>
    <property type="match status" value="1"/>
</dbReference>
<dbReference type="FunFam" id="1.10.1420.10:FF:000002">
    <property type="entry name" value="DNA mismatch repair protein MutS"/>
    <property type="match status" value="1"/>
</dbReference>
<dbReference type="FunFam" id="3.30.420.110:FF:000001">
    <property type="entry name" value="DNA mismatch repair protein MutS"/>
    <property type="match status" value="1"/>
</dbReference>
<dbReference type="FunFam" id="3.40.1170.10:FF:000001">
    <property type="entry name" value="DNA mismatch repair protein MutS"/>
    <property type="match status" value="1"/>
</dbReference>
<dbReference type="FunFam" id="3.40.50.300:FF:000283">
    <property type="entry name" value="DNA mismatch repair protein MutS"/>
    <property type="match status" value="1"/>
</dbReference>
<dbReference type="Gene3D" id="1.10.1420.10">
    <property type="match status" value="2"/>
</dbReference>
<dbReference type="Gene3D" id="6.10.140.430">
    <property type="match status" value="1"/>
</dbReference>
<dbReference type="Gene3D" id="3.40.1170.10">
    <property type="entry name" value="DNA repair protein MutS, domain I"/>
    <property type="match status" value="1"/>
</dbReference>
<dbReference type="Gene3D" id="3.30.420.110">
    <property type="entry name" value="MutS, connector domain"/>
    <property type="match status" value="1"/>
</dbReference>
<dbReference type="Gene3D" id="3.40.50.300">
    <property type="entry name" value="P-loop containing nucleotide triphosphate hydrolases"/>
    <property type="match status" value="1"/>
</dbReference>
<dbReference type="HAMAP" id="MF_00096">
    <property type="entry name" value="MutS"/>
    <property type="match status" value="1"/>
</dbReference>
<dbReference type="InterPro" id="IPR005748">
    <property type="entry name" value="DNA_mismatch_repair_MutS"/>
</dbReference>
<dbReference type="InterPro" id="IPR007695">
    <property type="entry name" value="DNA_mismatch_repair_MutS-lik_N"/>
</dbReference>
<dbReference type="InterPro" id="IPR017261">
    <property type="entry name" value="DNA_mismatch_repair_MutS/MSH"/>
</dbReference>
<dbReference type="InterPro" id="IPR000432">
    <property type="entry name" value="DNA_mismatch_repair_MutS_C"/>
</dbReference>
<dbReference type="InterPro" id="IPR007861">
    <property type="entry name" value="DNA_mismatch_repair_MutS_clamp"/>
</dbReference>
<dbReference type="InterPro" id="IPR007696">
    <property type="entry name" value="DNA_mismatch_repair_MutS_core"/>
</dbReference>
<dbReference type="InterPro" id="IPR016151">
    <property type="entry name" value="DNA_mismatch_repair_MutS_N"/>
</dbReference>
<dbReference type="InterPro" id="IPR036187">
    <property type="entry name" value="DNA_mismatch_repair_MutS_sf"/>
</dbReference>
<dbReference type="InterPro" id="IPR007860">
    <property type="entry name" value="DNA_mmatch_repair_MutS_con_dom"/>
</dbReference>
<dbReference type="InterPro" id="IPR045076">
    <property type="entry name" value="MutS"/>
</dbReference>
<dbReference type="InterPro" id="IPR036678">
    <property type="entry name" value="MutS_con_dom_sf"/>
</dbReference>
<dbReference type="InterPro" id="IPR027417">
    <property type="entry name" value="P-loop_NTPase"/>
</dbReference>
<dbReference type="NCBIfam" id="TIGR01070">
    <property type="entry name" value="mutS1"/>
    <property type="match status" value="1"/>
</dbReference>
<dbReference type="NCBIfam" id="NF003810">
    <property type="entry name" value="PRK05399.1"/>
    <property type="match status" value="1"/>
</dbReference>
<dbReference type="PANTHER" id="PTHR11361:SF34">
    <property type="entry name" value="DNA MISMATCH REPAIR PROTEIN MSH1, MITOCHONDRIAL"/>
    <property type="match status" value="1"/>
</dbReference>
<dbReference type="PANTHER" id="PTHR11361">
    <property type="entry name" value="DNA MISMATCH REPAIR PROTEIN MUTS FAMILY MEMBER"/>
    <property type="match status" value="1"/>
</dbReference>
<dbReference type="Pfam" id="PF01624">
    <property type="entry name" value="MutS_I"/>
    <property type="match status" value="1"/>
</dbReference>
<dbReference type="Pfam" id="PF05188">
    <property type="entry name" value="MutS_II"/>
    <property type="match status" value="1"/>
</dbReference>
<dbReference type="Pfam" id="PF05192">
    <property type="entry name" value="MutS_III"/>
    <property type="match status" value="1"/>
</dbReference>
<dbReference type="Pfam" id="PF05190">
    <property type="entry name" value="MutS_IV"/>
    <property type="match status" value="1"/>
</dbReference>
<dbReference type="Pfam" id="PF00488">
    <property type="entry name" value="MutS_V"/>
    <property type="match status" value="1"/>
</dbReference>
<dbReference type="PIRSF" id="PIRSF037677">
    <property type="entry name" value="DNA_mis_repair_Msh6"/>
    <property type="match status" value="1"/>
</dbReference>
<dbReference type="SMART" id="SM00534">
    <property type="entry name" value="MUTSac"/>
    <property type="match status" value="1"/>
</dbReference>
<dbReference type="SMART" id="SM00533">
    <property type="entry name" value="MUTSd"/>
    <property type="match status" value="1"/>
</dbReference>
<dbReference type="SUPFAM" id="SSF55271">
    <property type="entry name" value="DNA repair protein MutS, domain I"/>
    <property type="match status" value="1"/>
</dbReference>
<dbReference type="SUPFAM" id="SSF53150">
    <property type="entry name" value="DNA repair protein MutS, domain II"/>
    <property type="match status" value="1"/>
</dbReference>
<dbReference type="SUPFAM" id="SSF48334">
    <property type="entry name" value="DNA repair protein MutS, domain III"/>
    <property type="match status" value="1"/>
</dbReference>
<dbReference type="SUPFAM" id="SSF52540">
    <property type="entry name" value="P-loop containing nucleoside triphosphate hydrolases"/>
    <property type="match status" value="1"/>
</dbReference>
<dbReference type="PROSITE" id="PS00486">
    <property type="entry name" value="DNA_MISMATCH_REPAIR_2"/>
    <property type="match status" value="1"/>
</dbReference>
<proteinExistence type="inferred from homology"/>
<sequence length="862" mass="95456">MTSIDSSELEKHTPMMRQYLTMKAAHPEMLLFYRMGDFYELFYEDAKLASELLGISLTARGKSGGDPIPMAGLPYHAVEGYLAKLVQIGQSVAICEQVGDPATSKGPVERKVVRIVTPGTLTDEALLQEHQDNLLAAIYQGKVGFGYATLDISSGRFVIAELDTQEALEAELQRTRPVELLYSEDFSNLSLINHLKGIRRRPEWEFDFDTSVNLLLQQFGTKDLHGFGISDARLSLQAAGCLMQYVKDTQKTALPHINAIVRFNQADSIILDAATRRNLELTQNLSGGREHTLAWVLDNTATPMGSRMLQRWLHQPLRDNNIIASRHNAVAELIEANLFDELHQQLKSLGDIERIMARLALRSARPRDFARLRQALSLLPELQHTLGQCKTPLLTKLAQLIGEFPAEHELLENAIVDSPPMLIRDGGVIRSGYHSELDEWRALSEGASDYLTELEAREKQATGISTLKVGYNRVHGYYIEVSRLQADKVPLSYQRRQTLKGTERYITPELKVYEEKVLSSQGKALALEKQLWDQLFDLILPKLNELRDFANAAAELDVICCFAERAESLHYTQPQMVSKTGIQINAGRHPVVERVSSTAFIANPVNLDAKRHMLIVTGPNMGGKSTYMRQVALISLMAHIGCFVPADSAVIGPIDRIFTRIGASDDLASGRSTFMVEMTETANILHNATSQSLVLMDEIGRGTSTYDGLSLAWSAAEYLALQIKAMTLFATHYFELTQLPDLIPGANNVHLDAIEHDDTIAFMHAVQEGAASKSYGLQVAALAGVPSHVIQAAKHKLHQLESRDNQASPAVASAPQQQSLSLSPAPMMGEKALNKLTTINPDELSPKQALDLLYELKKLAKS</sequence>
<name>MUTS_SHEDO</name>
<evidence type="ECO:0000255" key="1">
    <source>
        <dbReference type="HAMAP-Rule" id="MF_00096"/>
    </source>
</evidence>
<evidence type="ECO:0000256" key="2">
    <source>
        <dbReference type="SAM" id="MobiDB-lite"/>
    </source>
</evidence>
<reference key="1">
    <citation type="submission" date="2006-03" db="EMBL/GenBank/DDBJ databases">
        <title>Complete sequence of Shewanella denitrificans OS217.</title>
        <authorList>
            <consortium name="US DOE Joint Genome Institute"/>
            <person name="Copeland A."/>
            <person name="Lucas S."/>
            <person name="Lapidus A."/>
            <person name="Barry K."/>
            <person name="Detter J.C."/>
            <person name="Glavina del Rio T."/>
            <person name="Hammon N."/>
            <person name="Israni S."/>
            <person name="Dalin E."/>
            <person name="Tice H."/>
            <person name="Pitluck S."/>
            <person name="Brettin T."/>
            <person name="Bruce D."/>
            <person name="Han C."/>
            <person name="Tapia R."/>
            <person name="Gilna P."/>
            <person name="Kiss H."/>
            <person name="Schmutz J."/>
            <person name="Larimer F."/>
            <person name="Land M."/>
            <person name="Hauser L."/>
            <person name="Kyrpides N."/>
            <person name="Lykidis A."/>
            <person name="Richardson P."/>
        </authorList>
    </citation>
    <scope>NUCLEOTIDE SEQUENCE [LARGE SCALE GENOMIC DNA]</scope>
    <source>
        <strain>OS217 / ATCC BAA-1090 / DSM 15013</strain>
    </source>
</reference>